<dbReference type="EC" id="3.4.21.-"/>
<dbReference type="EMBL" id="EF692502">
    <property type="protein sequence ID" value="ABV59222.1"/>
    <property type="molecule type" value="mRNA"/>
</dbReference>
<dbReference type="RefSeq" id="NP_001106130.1">
    <property type="nucleotide sequence ID" value="NM_001112660.1"/>
</dbReference>
<dbReference type="SMR" id="A8T666"/>
<dbReference type="FunCoup" id="A8T666">
    <property type="interactions" value="55"/>
</dbReference>
<dbReference type="STRING" id="9544.ENSMMUP00000007574"/>
<dbReference type="MEROPS" id="S08.039"/>
<dbReference type="GlyCosmos" id="A8T666">
    <property type="glycosylation" value="1 site, No reported glycans"/>
</dbReference>
<dbReference type="PaxDb" id="9544-ENSMMUP00000007574"/>
<dbReference type="ABCD" id="A8T666">
    <property type="antibodies" value="1 sequenced antibody"/>
</dbReference>
<dbReference type="Ensembl" id="ENSMMUT00000091051.1">
    <property type="protein sequence ID" value="ENSMMUP00000072327.1"/>
    <property type="gene ID" value="ENSMMUG00000005736.4"/>
</dbReference>
<dbReference type="GeneID" id="717147"/>
<dbReference type="KEGG" id="mcc:717147"/>
<dbReference type="CTD" id="255738"/>
<dbReference type="VEuPathDB" id="HostDB:ENSMMUG00000005736"/>
<dbReference type="VGNC" id="VGNC:100028">
    <property type="gene designation" value="PCSK9"/>
</dbReference>
<dbReference type="GeneTree" id="ENSGT00490000043472"/>
<dbReference type="InParanoid" id="A8T666"/>
<dbReference type="OrthoDB" id="206201at2759"/>
<dbReference type="Proteomes" id="UP000006718">
    <property type="component" value="Chromosome 1"/>
</dbReference>
<dbReference type="Bgee" id="ENSMMUG00000005736">
    <property type="expression patterns" value="Expressed in ileum and 12 other cell types or tissues"/>
</dbReference>
<dbReference type="ExpressionAtlas" id="A8T666">
    <property type="expression patterns" value="baseline"/>
</dbReference>
<dbReference type="GO" id="GO:0009986">
    <property type="term" value="C:cell surface"/>
    <property type="evidence" value="ECO:0000250"/>
    <property type="project" value="UniProtKB"/>
</dbReference>
<dbReference type="GO" id="GO:0005737">
    <property type="term" value="C:cytoplasm"/>
    <property type="evidence" value="ECO:0000250"/>
    <property type="project" value="UniProtKB"/>
</dbReference>
<dbReference type="GO" id="GO:0005769">
    <property type="term" value="C:early endosome"/>
    <property type="evidence" value="ECO:0000250"/>
    <property type="project" value="UniProtKB"/>
</dbReference>
<dbReference type="GO" id="GO:0005783">
    <property type="term" value="C:endoplasmic reticulum"/>
    <property type="evidence" value="ECO:0000250"/>
    <property type="project" value="UniProtKB"/>
</dbReference>
<dbReference type="GO" id="GO:0005615">
    <property type="term" value="C:extracellular space"/>
    <property type="evidence" value="ECO:0000318"/>
    <property type="project" value="GO_Central"/>
</dbReference>
<dbReference type="GO" id="GO:0005794">
    <property type="term" value="C:Golgi apparatus"/>
    <property type="evidence" value="ECO:0000250"/>
    <property type="project" value="UniProtKB"/>
</dbReference>
<dbReference type="GO" id="GO:0005770">
    <property type="term" value="C:late endosome"/>
    <property type="evidence" value="ECO:0000250"/>
    <property type="project" value="UniProtKB"/>
</dbReference>
<dbReference type="GO" id="GO:0005764">
    <property type="term" value="C:lysosome"/>
    <property type="evidence" value="ECO:0000250"/>
    <property type="project" value="UniProtKB"/>
</dbReference>
<dbReference type="GO" id="GO:0034185">
    <property type="term" value="F:apolipoprotein binding"/>
    <property type="evidence" value="ECO:0000250"/>
    <property type="project" value="UniProtKB"/>
</dbReference>
<dbReference type="GO" id="GO:0030169">
    <property type="term" value="F:low-density lipoprotein particle binding"/>
    <property type="evidence" value="ECO:0000250"/>
    <property type="project" value="UniProtKB"/>
</dbReference>
<dbReference type="GO" id="GO:0004252">
    <property type="term" value="F:serine-type endopeptidase activity"/>
    <property type="evidence" value="ECO:0000318"/>
    <property type="project" value="GO_Central"/>
</dbReference>
<dbReference type="GO" id="GO:0034189">
    <property type="term" value="F:very-low-density lipoprotein particle binding"/>
    <property type="evidence" value="ECO:0000250"/>
    <property type="project" value="UniProtKB"/>
</dbReference>
<dbReference type="GO" id="GO:0006915">
    <property type="term" value="P:apoptotic process"/>
    <property type="evidence" value="ECO:0007669"/>
    <property type="project" value="UniProtKB-KW"/>
</dbReference>
<dbReference type="GO" id="GO:0008203">
    <property type="term" value="P:cholesterol metabolic process"/>
    <property type="evidence" value="ECO:0007669"/>
    <property type="project" value="UniProtKB-KW"/>
</dbReference>
<dbReference type="GO" id="GO:0032802">
    <property type="term" value="P:low-density lipoprotein particle receptor catabolic process"/>
    <property type="evidence" value="ECO:0000250"/>
    <property type="project" value="UniProtKB"/>
</dbReference>
<dbReference type="GO" id="GO:0006508">
    <property type="term" value="P:proteolysis"/>
    <property type="evidence" value="ECO:0007669"/>
    <property type="project" value="UniProtKB-KW"/>
</dbReference>
<dbReference type="GO" id="GO:0043523">
    <property type="term" value="P:regulation of neuron apoptotic process"/>
    <property type="evidence" value="ECO:0000250"/>
    <property type="project" value="UniProtKB"/>
</dbReference>
<dbReference type="CDD" id="cd16839">
    <property type="entry name" value="PCSK9_C-CRD"/>
    <property type="match status" value="1"/>
</dbReference>
<dbReference type="CDD" id="cd04077">
    <property type="entry name" value="Peptidases_S8_PCSK9_ProteinaseK_like"/>
    <property type="match status" value="1"/>
</dbReference>
<dbReference type="FunFam" id="2.60.120.690:FF:000001">
    <property type="entry name" value="Proprotein convertase subtilisin/kexin type 9"/>
    <property type="match status" value="1"/>
</dbReference>
<dbReference type="FunFam" id="3.30.70.80:FF:000004">
    <property type="entry name" value="Proprotein convertase subtilisin/kexin type 9"/>
    <property type="match status" value="1"/>
</dbReference>
<dbReference type="FunFam" id="3.40.50.200:FF:000016">
    <property type="entry name" value="Proprotein convertase subtilisin/kexin type 9"/>
    <property type="match status" value="1"/>
</dbReference>
<dbReference type="Gene3D" id="3.30.70.80">
    <property type="entry name" value="Peptidase S8 propeptide/proteinase inhibitor I9"/>
    <property type="match status" value="1"/>
</dbReference>
<dbReference type="Gene3D" id="3.40.50.200">
    <property type="entry name" value="Peptidase S8/S53 domain"/>
    <property type="match status" value="1"/>
</dbReference>
<dbReference type="Gene3D" id="2.60.120.690">
    <property type="entry name" value="Proprotein convertase subtilisin/kexin type 9"/>
    <property type="match status" value="1"/>
</dbReference>
<dbReference type="InterPro" id="IPR041254">
    <property type="entry name" value="PCSK9_C1"/>
</dbReference>
<dbReference type="InterPro" id="IPR041052">
    <property type="entry name" value="PCSK9_C2"/>
</dbReference>
<dbReference type="InterPro" id="IPR041051">
    <property type="entry name" value="PCSK9_C3"/>
</dbReference>
<dbReference type="InterPro" id="IPR034193">
    <property type="entry name" value="PCSK9_ProteinaseK-like"/>
</dbReference>
<dbReference type="InterPro" id="IPR000209">
    <property type="entry name" value="Peptidase_S8/S53_dom"/>
</dbReference>
<dbReference type="InterPro" id="IPR036852">
    <property type="entry name" value="Peptidase_S8/S53_dom_sf"/>
</dbReference>
<dbReference type="InterPro" id="IPR050131">
    <property type="entry name" value="Peptidase_S8_subtilisin-like"/>
</dbReference>
<dbReference type="InterPro" id="IPR015500">
    <property type="entry name" value="Peptidase_S8_subtilisin-rel"/>
</dbReference>
<dbReference type="InterPro" id="IPR010259">
    <property type="entry name" value="S8pro/Inhibitor_I9"/>
</dbReference>
<dbReference type="InterPro" id="IPR037045">
    <property type="entry name" value="S8pro/Inhibitor_I9_sf"/>
</dbReference>
<dbReference type="PANTHER" id="PTHR43806">
    <property type="entry name" value="PEPTIDASE S8"/>
    <property type="match status" value="1"/>
</dbReference>
<dbReference type="PANTHER" id="PTHR43806:SF60">
    <property type="entry name" value="PROPROTEIN CONVERTASE SUBTILISIN_KEXIN TYPE 9"/>
    <property type="match status" value="1"/>
</dbReference>
<dbReference type="Pfam" id="PF05922">
    <property type="entry name" value="Inhibitor_I9"/>
    <property type="match status" value="1"/>
</dbReference>
<dbReference type="Pfam" id="PF18459">
    <property type="entry name" value="PCSK9_C1"/>
    <property type="match status" value="1"/>
</dbReference>
<dbReference type="Pfam" id="PF18464">
    <property type="entry name" value="PCSK9_C2"/>
    <property type="match status" value="1"/>
</dbReference>
<dbReference type="Pfam" id="PF18463">
    <property type="entry name" value="PCSK9_C3"/>
    <property type="match status" value="1"/>
</dbReference>
<dbReference type="Pfam" id="PF00082">
    <property type="entry name" value="Peptidase_S8"/>
    <property type="match status" value="1"/>
</dbReference>
<dbReference type="PRINTS" id="PR00723">
    <property type="entry name" value="SUBTILISIN"/>
</dbReference>
<dbReference type="SUPFAM" id="SSF54897">
    <property type="entry name" value="Protease propeptides/inhibitors"/>
    <property type="match status" value="1"/>
</dbReference>
<dbReference type="SUPFAM" id="SSF52743">
    <property type="entry name" value="Subtilisin-like"/>
    <property type="match status" value="1"/>
</dbReference>
<dbReference type="PROSITE" id="PS51892">
    <property type="entry name" value="SUBTILASE"/>
    <property type="match status" value="1"/>
</dbReference>
<comment type="function">
    <text evidence="1">Crucial player in the regulation of plasma cholesterol homeostasis. Binds to low-density lipid receptor family members: low density lipoprotein receptor (LDLR), very low density lipoprotein receptor (VLDLR), apolipoprotein E receptor (LRP1/APOER) and apolipoprotein receptor 2 (LRP8/APOER2), and promotes their degradation in intracellular acidic compartments. Acts via a non-proteolytic mechanism to enhance the degradation of the hepatic LDLR through a clathrin LDLRAP1/ARH-mediated pathway. May prevent the recycling of LDLR from endosomes to the cell surface or direct it to lysosomes for degradation. Can induce ubiquitination of LDLR leading to its subsequent degradation. Inhibits intracellular degradation of APOB via the autophagosome/lysosome pathway in a LDLR-independent manner. Involved in the disposal of non-acetylated intermediates of BACE1 in the early secretory pathway. Inhibits epithelial Na(+) channel (ENaC)-mediated Na(+) absorption by reducing ENaC surface expression primarily by increasing its proteasomal degradation. Regulates neuronal apoptosis via modulation of LRP8/APOER2 levels and related anti-apoptotic signaling pathways (By similarity).</text>
</comment>
<comment type="cofactor">
    <cofactor evidence="1">
        <name>Ca(2+)</name>
        <dbReference type="ChEBI" id="CHEBI:29108"/>
    </cofactor>
</comment>
<comment type="activity regulation">
    <text evidence="1">Its proteolytic activity is autoinhibited by the non-covalent binding of the propeptide to the catalytic domain. Inhibited by EGTA (By similarity).</text>
</comment>
<comment type="subunit">
    <text evidence="2">Monomer. Can self-associate to form dimers and higher multimers which may have increased LDLR degrading activity. The precursor protein but not the mature protein may form multimers. Interacts with APOB, VLDLR, LRP8/APOER2 and BACE1. The full-length immature form (pro-PCSK9) interacts with SCNN1A, SCNN1B and SCNN1G. The pro-PCSK9 form (via C-terminal domain) interacts with LDLR. Interacts (via the C-terminal domain) with ANXA2 (via repeat Annexin 1); the interaction inhibits the degradation of LDLR.</text>
</comment>
<comment type="subcellular location">
    <subcellularLocation>
        <location evidence="1">Cytoplasm</location>
    </subcellularLocation>
    <subcellularLocation>
        <location evidence="1">Secreted</location>
    </subcellularLocation>
    <subcellularLocation>
        <location evidence="1">Endosome</location>
    </subcellularLocation>
    <subcellularLocation>
        <location evidence="1">Lysosome</location>
    </subcellularLocation>
    <subcellularLocation>
        <location evidence="1">Cell surface</location>
    </subcellularLocation>
    <subcellularLocation>
        <location evidence="1">Endoplasmic reticulum</location>
    </subcellularLocation>
    <subcellularLocation>
        <location evidence="1">Golgi apparatus</location>
    </subcellularLocation>
    <text evidence="1">Autocatalytic cleavage is required to transport it from the endoplasmic reticulum to the Golgi apparatus and for the secretion of the mature protein. Localizes to the endoplasmic reticulum in the absence of LDLR and colocalizes to the cell surface and to the endosomes/lysosomes in the presence of LDLR. The sorting to the cell surface and endosomes is required in order to fully promote LDLR degradation (By similarity).</text>
</comment>
<comment type="domain">
    <text evidence="1">The C-terminal domain (CRD) is essential for the LDLR-binding and degrading activities.</text>
</comment>
<comment type="domain">
    <text evidence="1">The catalytic domain is responsible for mediating its self-association.</text>
</comment>
<comment type="PTM">
    <text evidence="1">Cleavage by furin and PCSK5 generates a truncated inactive protein that is unable to induce LDLR degradation.</text>
</comment>
<comment type="PTM">
    <text evidence="1">Undergoes autocatalytic cleavage in the endoplasmic reticulum to release the propeptide from the N-terminus and the cleavage of the propeptide is strictly required for its maturation and activation. The cleaved propeptide however remains associated with the catalytic domain through non-covalent interactions, preventing potential substrates from accessing its active site. As a result, it is secreted from cells as a propeptide-containing, enzymatically inactive protein (By similarity).</text>
</comment>
<comment type="PTM">
    <text evidence="1">Phosphorylation protects the propeptide against proteolysis.</text>
</comment>
<comment type="similarity">
    <text evidence="5">Belongs to the peptidase S8 family.</text>
</comment>
<name>PCSK9_MACMU</name>
<sequence length="692" mass="74528">MGTVSSRRSWWPLPLPLLLLLLLGPAGARAQEDEDGDYEELVLALRSEEDGLADAPEHGATATFHRCAKDPWRLPGTYVVVLKEETHRSQSERTARRLQAQAARRGYLTKILHVFHHLLPGFLVKMSGDLLELALKLPHVDYIEEDSSVFAQSIPWNLERITPARYRADEYQPPKGGSLVEVYLLDTSIQSDHREIEGRVMVTDFESVPEEDGTRFHRQASKCDSHGTHLAGVVSGRDAGVAKGAGLRSLRVLNCQGKGTVSGTLIGLEFIRKSQLVQPVGPLVVLLPLAGGYSRVFNAACQRLARAGVVLVTAAGNFRDDACLYSPASAPEVITVGATNAQDQPVTLGTLGTNFGRCVDLFAPGEDIIGASSDCSTCFVSRSGTSQAAAHVAGIAAMMLSAEPELTLAELRQRLIHFSAKDVINEAWFPEDQRVLTPNLVAALPPSTHRAGWQLFCRTVWSAHSGPTRMATAVARCAQDEELLSCSSFSRSGKRRGERIEAQGGKRVCRAHNAFGGEGVYAIARCCLLPQVNCSVHTAPPAGASMGTRVHCHQQGHVLTGCSSHWEVEDLGTHKPPVLRPRGQPNQCVGHREASIHASCCHAPGLECKVKEHGIPAPQEQVIVACEDGWTLTGCSPLPGTSHVLGAYAVDNTCVVRSRDVSTTGSTSKEAVAAVAICCRSRHLVQASQELQ</sequence>
<evidence type="ECO:0000250" key="1"/>
<evidence type="ECO:0000250" key="2">
    <source>
        <dbReference type="UniProtKB" id="Q8NBP7"/>
    </source>
</evidence>
<evidence type="ECO:0000255" key="3"/>
<evidence type="ECO:0000255" key="4">
    <source>
        <dbReference type="PROSITE-ProRule" id="PRU01240"/>
    </source>
</evidence>
<evidence type="ECO:0000305" key="5"/>
<organism>
    <name type="scientific">Macaca mulatta</name>
    <name type="common">Rhesus macaque</name>
    <dbReference type="NCBI Taxonomy" id="9544"/>
    <lineage>
        <taxon>Eukaryota</taxon>
        <taxon>Metazoa</taxon>
        <taxon>Chordata</taxon>
        <taxon>Craniata</taxon>
        <taxon>Vertebrata</taxon>
        <taxon>Euteleostomi</taxon>
        <taxon>Mammalia</taxon>
        <taxon>Eutheria</taxon>
        <taxon>Euarchontoglires</taxon>
        <taxon>Primates</taxon>
        <taxon>Haplorrhini</taxon>
        <taxon>Catarrhini</taxon>
        <taxon>Cercopithecidae</taxon>
        <taxon>Cercopithecinae</taxon>
        <taxon>Macaca</taxon>
    </lineage>
</organism>
<proteinExistence type="evidence at transcript level"/>
<feature type="signal peptide" evidence="1">
    <location>
        <begin position="1"/>
        <end position="30"/>
    </location>
</feature>
<feature type="propeptide" id="PRO_0000318284" evidence="1">
    <location>
        <begin position="31"/>
        <end position="152"/>
    </location>
</feature>
<feature type="chain" id="PRO_0000318285" description="Proprotein convertase subtilisin/kexin type 9">
    <location>
        <begin position="153"/>
        <end position="692"/>
    </location>
</feature>
<feature type="domain" description="Inhibitor I9" evidence="3">
    <location>
        <begin position="77"/>
        <end position="149"/>
    </location>
</feature>
<feature type="domain" description="Peptidase S8" evidence="4">
    <location>
        <begin position="155"/>
        <end position="444"/>
    </location>
</feature>
<feature type="region of interest" description="C-terminal domain" evidence="1">
    <location>
        <begin position="450"/>
        <end position="692"/>
    </location>
</feature>
<feature type="active site" description="Charge relay system" evidence="4">
    <location>
        <position position="186"/>
    </location>
</feature>
<feature type="active site" description="Charge relay system" evidence="4">
    <location>
        <position position="226"/>
    </location>
</feature>
<feature type="active site" description="Charge relay system" evidence="4">
    <location>
        <position position="386"/>
    </location>
</feature>
<feature type="site" description="Cleavage; by autolysis" evidence="1">
    <location>
        <begin position="152"/>
        <end position="153"/>
    </location>
</feature>
<feature type="site" description="Cleavage; by furin and PCSK5" evidence="1">
    <location>
        <begin position="218"/>
        <end position="219"/>
    </location>
</feature>
<feature type="modified residue" description="Sulfotyrosine" evidence="1">
    <location>
        <position position="38"/>
    </location>
</feature>
<feature type="modified residue" description="Phosphoserine" evidence="2">
    <location>
        <position position="47"/>
    </location>
</feature>
<feature type="modified residue" description="Phosphoserine" evidence="2">
    <location>
        <position position="688"/>
    </location>
</feature>
<feature type="glycosylation site" description="N-linked (GlcNAc...) asparagine" evidence="3">
    <location>
        <position position="533"/>
    </location>
</feature>
<feature type="disulfide bond" evidence="3">
    <location>
        <begin position="223"/>
        <end position="255"/>
    </location>
</feature>
<feature type="disulfide bond" evidence="3">
    <location>
        <begin position="323"/>
        <end position="358"/>
    </location>
</feature>
<feature type="disulfide bond" evidence="3">
    <location>
        <begin position="457"/>
        <end position="527"/>
    </location>
</feature>
<feature type="disulfide bond" evidence="3">
    <location>
        <begin position="477"/>
        <end position="526"/>
    </location>
</feature>
<feature type="disulfide bond" evidence="3">
    <location>
        <begin position="486"/>
        <end position="509"/>
    </location>
</feature>
<feature type="disulfide bond" evidence="3">
    <location>
        <begin position="534"/>
        <end position="601"/>
    </location>
</feature>
<feature type="disulfide bond" evidence="3">
    <location>
        <begin position="552"/>
        <end position="600"/>
    </location>
</feature>
<feature type="disulfide bond" evidence="3">
    <location>
        <begin position="562"/>
        <end position="588"/>
    </location>
</feature>
<feature type="disulfide bond" evidence="3">
    <location>
        <begin position="608"/>
        <end position="679"/>
    </location>
</feature>
<feature type="disulfide bond" evidence="3">
    <location>
        <begin position="626"/>
        <end position="678"/>
    </location>
</feature>
<feature type="disulfide bond" evidence="3">
    <location>
        <begin position="635"/>
        <end position="654"/>
    </location>
</feature>
<gene>
    <name type="primary">PCSK9</name>
</gene>
<accession>A8T666</accession>
<keyword id="KW-0053">Apoptosis</keyword>
<keyword id="KW-0068">Autocatalytic cleavage</keyword>
<keyword id="KW-0106">Calcium</keyword>
<keyword id="KW-0153">Cholesterol metabolism</keyword>
<keyword id="KW-0963">Cytoplasm</keyword>
<keyword id="KW-1015">Disulfide bond</keyword>
<keyword id="KW-0256">Endoplasmic reticulum</keyword>
<keyword id="KW-0967">Endosome</keyword>
<keyword id="KW-0325">Glycoprotein</keyword>
<keyword id="KW-0333">Golgi apparatus</keyword>
<keyword id="KW-0378">Hydrolase</keyword>
<keyword id="KW-0443">Lipid metabolism</keyword>
<keyword id="KW-0458">Lysosome</keyword>
<keyword id="KW-0597">Phosphoprotein</keyword>
<keyword id="KW-0645">Protease</keyword>
<keyword id="KW-1185">Reference proteome</keyword>
<keyword id="KW-0964">Secreted</keyword>
<keyword id="KW-0720">Serine protease</keyword>
<keyword id="KW-0732">Signal</keyword>
<keyword id="KW-0753">Steroid metabolism</keyword>
<keyword id="KW-1207">Sterol metabolism</keyword>
<keyword id="KW-0765">Sulfation</keyword>
<keyword id="KW-0865">Zymogen</keyword>
<reference key="1">
    <citation type="journal article" date="2007" name="PLoS ONE">
        <title>Evidence for positive selection in the C-terminal domain of the cholesterol metabolism gene PCSK9 based on phylogenetic analysis in 14 primate species.</title>
        <authorList>
            <person name="Ding K."/>
            <person name="McDonough S.J."/>
            <person name="Kullo I.J."/>
        </authorList>
    </citation>
    <scope>NUCLEOTIDE SEQUENCE [MRNA]</scope>
</reference>
<protein>
    <recommendedName>
        <fullName>Proprotein convertase subtilisin/kexin type 9</fullName>
        <ecNumber>3.4.21.-</ecNumber>
    </recommendedName>
    <alternativeName>
        <fullName>Proprotein convertase 9</fullName>
        <shortName>PC9</shortName>
    </alternativeName>
    <alternativeName>
        <fullName>Subtilisin/kexin-like protease PC9</fullName>
    </alternativeName>
</protein>